<organism>
    <name type="scientific">Brucella abortus biovar 1 (strain 9-941)</name>
    <dbReference type="NCBI Taxonomy" id="262698"/>
    <lineage>
        <taxon>Bacteria</taxon>
        <taxon>Pseudomonadati</taxon>
        <taxon>Pseudomonadota</taxon>
        <taxon>Alphaproteobacteria</taxon>
        <taxon>Hyphomicrobiales</taxon>
        <taxon>Brucellaceae</taxon>
        <taxon>Brucella/Ochrobactrum group</taxon>
        <taxon>Brucella</taxon>
    </lineage>
</organism>
<accession>Q57CX9</accession>
<name>PYRH_BRUAB</name>
<keyword id="KW-0021">Allosteric enzyme</keyword>
<keyword id="KW-0067">ATP-binding</keyword>
<keyword id="KW-0963">Cytoplasm</keyword>
<keyword id="KW-0418">Kinase</keyword>
<keyword id="KW-0547">Nucleotide-binding</keyword>
<keyword id="KW-0665">Pyrimidine biosynthesis</keyword>
<keyword id="KW-0808">Transferase</keyword>
<protein>
    <recommendedName>
        <fullName evidence="1">Uridylate kinase</fullName>
        <shortName evidence="1">UK</shortName>
        <ecNumber evidence="1">2.7.4.22</ecNumber>
    </recommendedName>
    <alternativeName>
        <fullName evidence="1">Uridine monophosphate kinase</fullName>
        <shortName evidence="1">UMP kinase</shortName>
        <shortName evidence="1">UMPK</shortName>
    </alternativeName>
</protein>
<reference key="1">
    <citation type="journal article" date="2005" name="J. Bacteriol.">
        <title>Completion of the genome sequence of Brucella abortus and comparison to the highly similar genomes of Brucella melitensis and Brucella suis.</title>
        <authorList>
            <person name="Halling S.M."/>
            <person name="Peterson-Burch B.D."/>
            <person name="Bricker B.J."/>
            <person name="Zuerner R.L."/>
            <person name="Qing Z."/>
            <person name="Li L.-L."/>
            <person name="Kapur V."/>
            <person name="Alt D.P."/>
            <person name="Olsen S.C."/>
        </authorList>
    </citation>
    <scope>NUCLEOTIDE SEQUENCE [LARGE SCALE GENOMIC DNA]</scope>
    <source>
        <strain>9-941</strain>
    </source>
</reference>
<gene>
    <name evidence="1" type="primary">pyrH</name>
    <name type="ordered locus">BruAb1_1166</name>
</gene>
<proteinExistence type="inferred from homology"/>
<comment type="function">
    <text evidence="1">Catalyzes the reversible phosphorylation of UMP to UDP.</text>
</comment>
<comment type="catalytic activity">
    <reaction evidence="1">
        <text>UMP + ATP = UDP + ADP</text>
        <dbReference type="Rhea" id="RHEA:24400"/>
        <dbReference type="ChEBI" id="CHEBI:30616"/>
        <dbReference type="ChEBI" id="CHEBI:57865"/>
        <dbReference type="ChEBI" id="CHEBI:58223"/>
        <dbReference type="ChEBI" id="CHEBI:456216"/>
        <dbReference type="EC" id="2.7.4.22"/>
    </reaction>
</comment>
<comment type="activity regulation">
    <text evidence="1">Allosterically activated by GTP. Inhibited by UTP.</text>
</comment>
<comment type="pathway">
    <text evidence="1">Pyrimidine metabolism; CTP biosynthesis via de novo pathway; UDP from UMP (UMPK route): step 1/1.</text>
</comment>
<comment type="subunit">
    <text evidence="1">Homohexamer.</text>
</comment>
<comment type="subcellular location">
    <subcellularLocation>
        <location evidence="1">Cytoplasm</location>
    </subcellularLocation>
</comment>
<comment type="similarity">
    <text evidence="1">Belongs to the UMP kinase family.</text>
</comment>
<evidence type="ECO:0000255" key="1">
    <source>
        <dbReference type="HAMAP-Rule" id="MF_01220"/>
    </source>
</evidence>
<feature type="chain" id="PRO_1000053896" description="Uridylate kinase">
    <location>
        <begin position="1"/>
        <end position="240"/>
    </location>
</feature>
<feature type="region of interest" description="Involved in allosteric activation by GTP" evidence="1">
    <location>
        <begin position="21"/>
        <end position="26"/>
    </location>
</feature>
<feature type="binding site" evidence="1">
    <location>
        <begin position="13"/>
        <end position="16"/>
    </location>
    <ligand>
        <name>ATP</name>
        <dbReference type="ChEBI" id="CHEBI:30616"/>
    </ligand>
</feature>
<feature type="binding site" evidence="1">
    <location>
        <position position="55"/>
    </location>
    <ligand>
        <name>UMP</name>
        <dbReference type="ChEBI" id="CHEBI:57865"/>
    </ligand>
</feature>
<feature type="binding site" evidence="1">
    <location>
        <position position="56"/>
    </location>
    <ligand>
        <name>ATP</name>
        <dbReference type="ChEBI" id="CHEBI:30616"/>
    </ligand>
</feature>
<feature type="binding site" evidence="1">
    <location>
        <position position="60"/>
    </location>
    <ligand>
        <name>ATP</name>
        <dbReference type="ChEBI" id="CHEBI:30616"/>
    </ligand>
</feature>
<feature type="binding site" evidence="1">
    <location>
        <position position="75"/>
    </location>
    <ligand>
        <name>UMP</name>
        <dbReference type="ChEBI" id="CHEBI:57865"/>
    </ligand>
</feature>
<feature type="binding site" evidence="1">
    <location>
        <begin position="136"/>
        <end position="143"/>
    </location>
    <ligand>
        <name>UMP</name>
        <dbReference type="ChEBI" id="CHEBI:57865"/>
    </ligand>
</feature>
<feature type="binding site" evidence="1">
    <location>
        <position position="163"/>
    </location>
    <ligand>
        <name>ATP</name>
        <dbReference type="ChEBI" id="CHEBI:30616"/>
    </ligand>
</feature>
<feature type="binding site" evidence="1">
    <location>
        <position position="164"/>
    </location>
    <ligand>
        <name>ATP</name>
        <dbReference type="ChEBI" id="CHEBI:30616"/>
    </ligand>
</feature>
<feature type="binding site" evidence="1">
    <location>
        <position position="169"/>
    </location>
    <ligand>
        <name>ATP</name>
        <dbReference type="ChEBI" id="CHEBI:30616"/>
    </ligand>
</feature>
<feature type="binding site" evidence="1">
    <location>
        <position position="172"/>
    </location>
    <ligand>
        <name>ATP</name>
        <dbReference type="ChEBI" id="CHEBI:30616"/>
    </ligand>
</feature>
<dbReference type="EC" id="2.7.4.22" evidence="1"/>
<dbReference type="EMBL" id="AE017223">
    <property type="protein sequence ID" value="AAX74505.1"/>
    <property type="molecule type" value="Genomic_DNA"/>
</dbReference>
<dbReference type="RefSeq" id="WP_002964287.1">
    <property type="nucleotide sequence ID" value="NC_006932.1"/>
</dbReference>
<dbReference type="SMR" id="Q57CX9"/>
<dbReference type="EnsemblBacteria" id="AAX74505">
    <property type="protein sequence ID" value="AAX74505"/>
    <property type="gene ID" value="BruAb1_1166"/>
</dbReference>
<dbReference type="GeneID" id="97533590"/>
<dbReference type="KEGG" id="bmb:BruAb1_1166"/>
<dbReference type="HOGENOM" id="CLU_033861_0_0_5"/>
<dbReference type="UniPathway" id="UPA00159">
    <property type="reaction ID" value="UER00275"/>
</dbReference>
<dbReference type="Proteomes" id="UP000000540">
    <property type="component" value="Chromosome I"/>
</dbReference>
<dbReference type="GO" id="GO:0005829">
    <property type="term" value="C:cytosol"/>
    <property type="evidence" value="ECO:0007669"/>
    <property type="project" value="TreeGrafter"/>
</dbReference>
<dbReference type="GO" id="GO:0005524">
    <property type="term" value="F:ATP binding"/>
    <property type="evidence" value="ECO:0007669"/>
    <property type="project" value="UniProtKB-KW"/>
</dbReference>
<dbReference type="GO" id="GO:0033862">
    <property type="term" value="F:UMP kinase activity"/>
    <property type="evidence" value="ECO:0007669"/>
    <property type="project" value="UniProtKB-EC"/>
</dbReference>
<dbReference type="GO" id="GO:0044210">
    <property type="term" value="P:'de novo' CTP biosynthetic process"/>
    <property type="evidence" value="ECO:0007669"/>
    <property type="project" value="UniProtKB-UniRule"/>
</dbReference>
<dbReference type="GO" id="GO:0006225">
    <property type="term" value="P:UDP biosynthetic process"/>
    <property type="evidence" value="ECO:0007669"/>
    <property type="project" value="TreeGrafter"/>
</dbReference>
<dbReference type="CDD" id="cd04254">
    <property type="entry name" value="AAK_UMPK-PyrH-Ec"/>
    <property type="match status" value="1"/>
</dbReference>
<dbReference type="FunFam" id="3.40.1160.10:FF:000001">
    <property type="entry name" value="Uridylate kinase"/>
    <property type="match status" value="1"/>
</dbReference>
<dbReference type="Gene3D" id="3.40.1160.10">
    <property type="entry name" value="Acetylglutamate kinase-like"/>
    <property type="match status" value="1"/>
</dbReference>
<dbReference type="HAMAP" id="MF_01220_B">
    <property type="entry name" value="PyrH_B"/>
    <property type="match status" value="1"/>
</dbReference>
<dbReference type="InterPro" id="IPR036393">
    <property type="entry name" value="AceGlu_kinase-like_sf"/>
</dbReference>
<dbReference type="InterPro" id="IPR001048">
    <property type="entry name" value="Asp/Glu/Uridylate_kinase"/>
</dbReference>
<dbReference type="InterPro" id="IPR011817">
    <property type="entry name" value="Uridylate_kinase"/>
</dbReference>
<dbReference type="InterPro" id="IPR015963">
    <property type="entry name" value="Uridylate_kinase_bac"/>
</dbReference>
<dbReference type="NCBIfam" id="TIGR02075">
    <property type="entry name" value="pyrH_bact"/>
    <property type="match status" value="1"/>
</dbReference>
<dbReference type="PANTHER" id="PTHR42833">
    <property type="entry name" value="URIDYLATE KINASE"/>
    <property type="match status" value="1"/>
</dbReference>
<dbReference type="PANTHER" id="PTHR42833:SF4">
    <property type="entry name" value="URIDYLATE KINASE PUMPKIN, CHLOROPLASTIC"/>
    <property type="match status" value="1"/>
</dbReference>
<dbReference type="Pfam" id="PF00696">
    <property type="entry name" value="AA_kinase"/>
    <property type="match status" value="1"/>
</dbReference>
<dbReference type="PIRSF" id="PIRSF005650">
    <property type="entry name" value="Uridylate_kin"/>
    <property type="match status" value="1"/>
</dbReference>
<dbReference type="SUPFAM" id="SSF53633">
    <property type="entry name" value="Carbamate kinase-like"/>
    <property type="match status" value="1"/>
</dbReference>
<sequence>MTGKPAYKRVLLKASGEALMGSQGFGIDVSVADRIANDIKQARALGVEVGVVIGGGNIFRGVAVASKGGDRVTGDHMGMLATVINSLALRTSLHKIGVDSVVLSAIAMPEICESFSQRQATAYMDEGKVVIFAGGTGNPFFTTDSAAALRAAEIEADALLKGTQVDGIYSADPKKDPGATRFDQLTHKEVLDRGLAVMDTAAVALARENNIPIIVYSIHENGGLADILQGKGRCTIVSDN</sequence>